<dbReference type="EMBL" id="AK019025">
    <property type="protein sequence ID" value="BAB31515.1"/>
    <property type="molecule type" value="mRNA"/>
</dbReference>
<dbReference type="EMBL" id="AL590969">
    <property type="status" value="NOT_ANNOTATED_CDS"/>
    <property type="molecule type" value="Genomic_DNA"/>
</dbReference>
<dbReference type="EMBL" id="BC026206">
    <property type="protein sequence ID" value="AAH26206.1"/>
    <property type="molecule type" value="mRNA"/>
</dbReference>
<dbReference type="CCDS" id="CCDS25460.1"/>
<dbReference type="RefSeq" id="NP_080894.1">
    <property type="nucleotide sequence ID" value="NM_026618.2"/>
</dbReference>
<dbReference type="SMR" id="Q9D2R6"/>
<dbReference type="BioGRID" id="206604">
    <property type="interactions" value="2"/>
</dbReference>
<dbReference type="FunCoup" id="Q9D2R6">
    <property type="interactions" value="693"/>
</dbReference>
<dbReference type="IntAct" id="Q9D2R6">
    <property type="interactions" value="1"/>
</dbReference>
<dbReference type="STRING" id="10090.ENSMUSP00000017332"/>
<dbReference type="GlyGen" id="Q9D2R6">
    <property type="glycosylation" value="1 site, 1 O-linked glycan (1 site)"/>
</dbReference>
<dbReference type="iPTMnet" id="Q9D2R6"/>
<dbReference type="PhosphoSitePlus" id="Q9D2R6"/>
<dbReference type="jPOST" id="Q9D2R6"/>
<dbReference type="PaxDb" id="10090-ENSMUSP00000017332"/>
<dbReference type="PeptideAtlas" id="Q9D2R6"/>
<dbReference type="ProteomicsDB" id="283415"/>
<dbReference type="Pumba" id="Q9D2R6"/>
<dbReference type="TopDownProteomics" id="Q9D2R6"/>
<dbReference type="Antibodypedia" id="29425">
    <property type="antibodies" value="66 antibodies from 17 providers"/>
</dbReference>
<dbReference type="DNASU" id="52469"/>
<dbReference type="Ensembl" id="ENSMUST00000017332.4">
    <property type="protein sequence ID" value="ENSMUSP00000017332.4"/>
    <property type="gene ID" value="ENSMUSG00000017188.4"/>
</dbReference>
<dbReference type="GeneID" id="52469"/>
<dbReference type="KEGG" id="mmu:52469"/>
<dbReference type="UCSC" id="uc007log.1">
    <property type="organism name" value="mouse"/>
</dbReference>
<dbReference type="AGR" id="MGI:1098757"/>
<dbReference type="CTD" id="28958"/>
<dbReference type="MGI" id="MGI:1098757">
    <property type="gene designation" value="Coa3"/>
</dbReference>
<dbReference type="VEuPathDB" id="HostDB:ENSMUSG00000017188"/>
<dbReference type="eggNOG" id="KOG4782">
    <property type="taxonomic scope" value="Eukaryota"/>
</dbReference>
<dbReference type="GeneTree" id="ENSGT00390000016262"/>
<dbReference type="HOGENOM" id="CLU_167761_0_1_1"/>
<dbReference type="InParanoid" id="Q9D2R6"/>
<dbReference type="OMA" id="MHFIRQV"/>
<dbReference type="OrthoDB" id="10018333at2759"/>
<dbReference type="PhylomeDB" id="Q9D2R6"/>
<dbReference type="TreeFam" id="TF314703"/>
<dbReference type="Reactome" id="R-MMU-9864848">
    <property type="pathway name" value="Complex IV assembly"/>
</dbReference>
<dbReference type="BioGRID-ORCS" id="52469">
    <property type="hits" value="11 hits in 77 CRISPR screens"/>
</dbReference>
<dbReference type="ChiTaRS" id="Coa3">
    <property type="organism name" value="mouse"/>
</dbReference>
<dbReference type="PRO" id="PR:Q9D2R6"/>
<dbReference type="Proteomes" id="UP000000589">
    <property type="component" value="Chromosome 11"/>
</dbReference>
<dbReference type="RNAct" id="Q9D2R6">
    <property type="molecule type" value="protein"/>
</dbReference>
<dbReference type="Bgee" id="ENSMUSG00000017188">
    <property type="expression patterns" value="Expressed in facial nucleus and 264 other cell types or tissues"/>
</dbReference>
<dbReference type="ExpressionAtlas" id="Q9D2R6">
    <property type="expression patterns" value="baseline and differential"/>
</dbReference>
<dbReference type="GO" id="GO:0005743">
    <property type="term" value="C:mitochondrial inner membrane"/>
    <property type="evidence" value="ECO:0000250"/>
    <property type="project" value="UniProtKB"/>
</dbReference>
<dbReference type="GO" id="GO:0005739">
    <property type="term" value="C:mitochondrion"/>
    <property type="evidence" value="ECO:0007005"/>
    <property type="project" value="MGI"/>
</dbReference>
<dbReference type="GO" id="GO:0033617">
    <property type="term" value="P:mitochondrial cytochrome c oxidase assembly"/>
    <property type="evidence" value="ECO:0000250"/>
    <property type="project" value="UniProtKB"/>
</dbReference>
<dbReference type="GO" id="GO:0070131">
    <property type="term" value="P:positive regulation of mitochondrial translation"/>
    <property type="evidence" value="ECO:0000250"/>
    <property type="project" value="UniProtKB"/>
</dbReference>
<dbReference type="InterPro" id="IPR041752">
    <property type="entry name" value="Coa3"/>
</dbReference>
<dbReference type="InterPro" id="IPR018628">
    <property type="entry name" value="Coa3_cc"/>
</dbReference>
<dbReference type="PANTHER" id="PTHR15642:SF3">
    <property type="entry name" value="CYTOCHROME C OXIDASE ASSEMBLY FACTOR 3 HOMOLOG, MITOCHONDRIAL"/>
    <property type="match status" value="1"/>
</dbReference>
<dbReference type="PANTHER" id="PTHR15642">
    <property type="entry name" value="CYTOCHROME C OXIDASE ASSEMBLY FACTOR 3, MITOCHONDRIAL"/>
    <property type="match status" value="1"/>
</dbReference>
<dbReference type="Pfam" id="PF09813">
    <property type="entry name" value="Coa3_cc"/>
    <property type="match status" value="1"/>
</dbReference>
<comment type="function">
    <text evidence="2">Core component of the MITRAC (mitochondrial translation regulation assembly intermediate of cytochrome c oxidase complex) complex, that regulates cytochrome c oxidase assembly. MITRAC complexes regulate both translation of mitochondrial encoded components and assembly of nuclear-encoded components imported in mitochondrion. Required for efficient translation of MT-CO1 and mitochondrial respiratory chain complex IV assembly.</text>
</comment>
<comment type="subunit">
    <text evidence="2">Along with COX14, core component of the MITRAC (mitochondrial translation regulation assembly intermediate of cytochrome c oxidase complex) complex. Interacts with MT-CO1/COX1, SMIM20, SURF1 and TIMM21.</text>
</comment>
<comment type="subcellular location">
    <subcellularLocation>
        <location evidence="1">Mitochondrion inner membrane</location>
        <topology evidence="1">Single-pass membrane protein</topology>
    </subcellularLocation>
</comment>
<comment type="similarity">
    <text evidence="5">Belongs to the COA3 family.</text>
</comment>
<sequence length="108" mass="11987">MAAPGAGDPLNAKNGNAPFAQRIDPSREKLTPAQLQFMRQVQLAQWQKTLPQRRTRNIMTGLGIGALVLAIYGYTFYSVAQERFLDELEDEAKAARARALERERASGP</sequence>
<keyword id="KW-0007">Acetylation</keyword>
<keyword id="KW-0175">Coiled coil</keyword>
<keyword id="KW-0472">Membrane</keyword>
<keyword id="KW-0496">Mitochondrion</keyword>
<keyword id="KW-0999">Mitochondrion inner membrane</keyword>
<keyword id="KW-1185">Reference proteome</keyword>
<keyword id="KW-0812">Transmembrane</keyword>
<keyword id="KW-1133">Transmembrane helix</keyword>
<name>COA3_MOUSE</name>
<evidence type="ECO:0000250" key="1"/>
<evidence type="ECO:0000250" key="2">
    <source>
        <dbReference type="UniProtKB" id="Q9Y2R0"/>
    </source>
</evidence>
<evidence type="ECO:0000255" key="3"/>
<evidence type="ECO:0000256" key="4">
    <source>
        <dbReference type="SAM" id="MobiDB-lite"/>
    </source>
</evidence>
<evidence type="ECO:0000305" key="5"/>
<gene>
    <name type="primary">Coa3</name>
    <name type="synonym">Ccdc56</name>
</gene>
<feature type="initiator methionine" description="Removed" evidence="2">
    <location>
        <position position="1"/>
    </location>
</feature>
<feature type="chain" id="PRO_0000239439" description="Cytochrome c oxidase assembly factor 3 homolog, mitochondrial">
    <location>
        <begin position="2"/>
        <end position="108"/>
    </location>
</feature>
<feature type="topological domain" description="Mitochondrial matrix" evidence="3">
    <location>
        <begin position="2"/>
        <end position="57"/>
    </location>
</feature>
<feature type="transmembrane region" description="Helical" evidence="3">
    <location>
        <begin position="58"/>
        <end position="80"/>
    </location>
</feature>
<feature type="topological domain" description="Mitochondrial intermembrane" evidence="3">
    <location>
        <begin position="81"/>
        <end position="108"/>
    </location>
</feature>
<feature type="region of interest" description="Disordered" evidence="4">
    <location>
        <begin position="1"/>
        <end position="25"/>
    </location>
</feature>
<feature type="coiled-coil region" evidence="3">
    <location>
        <begin position="78"/>
        <end position="106"/>
    </location>
</feature>
<feature type="modified residue" description="N-acetylalanine" evidence="2">
    <location>
        <position position="2"/>
    </location>
</feature>
<protein>
    <recommendedName>
        <fullName>Cytochrome c oxidase assembly factor 3 homolog, mitochondrial</fullName>
    </recommendedName>
    <alternativeName>
        <fullName>Coiled-coil domain-containing protein 56</fullName>
    </alternativeName>
</protein>
<accession>Q9D2R6</accession>
<accession>A2A4J6</accession>
<proteinExistence type="evidence at protein level"/>
<organism>
    <name type="scientific">Mus musculus</name>
    <name type="common">Mouse</name>
    <dbReference type="NCBI Taxonomy" id="10090"/>
    <lineage>
        <taxon>Eukaryota</taxon>
        <taxon>Metazoa</taxon>
        <taxon>Chordata</taxon>
        <taxon>Craniata</taxon>
        <taxon>Vertebrata</taxon>
        <taxon>Euteleostomi</taxon>
        <taxon>Mammalia</taxon>
        <taxon>Eutheria</taxon>
        <taxon>Euarchontoglires</taxon>
        <taxon>Glires</taxon>
        <taxon>Rodentia</taxon>
        <taxon>Myomorpha</taxon>
        <taxon>Muroidea</taxon>
        <taxon>Muridae</taxon>
        <taxon>Murinae</taxon>
        <taxon>Mus</taxon>
        <taxon>Mus</taxon>
    </lineage>
</organism>
<reference key="1">
    <citation type="journal article" date="2005" name="Science">
        <title>The transcriptional landscape of the mammalian genome.</title>
        <authorList>
            <person name="Carninci P."/>
            <person name="Kasukawa T."/>
            <person name="Katayama S."/>
            <person name="Gough J."/>
            <person name="Frith M.C."/>
            <person name="Maeda N."/>
            <person name="Oyama R."/>
            <person name="Ravasi T."/>
            <person name="Lenhard B."/>
            <person name="Wells C."/>
            <person name="Kodzius R."/>
            <person name="Shimokawa K."/>
            <person name="Bajic V.B."/>
            <person name="Brenner S.E."/>
            <person name="Batalov S."/>
            <person name="Forrest A.R."/>
            <person name="Zavolan M."/>
            <person name="Davis M.J."/>
            <person name="Wilming L.G."/>
            <person name="Aidinis V."/>
            <person name="Allen J.E."/>
            <person name="Ambesi-Impiombato A."/>
            <person name="Apweiler R."/>
            <person name="Aturaliya R.N."/>
            <person name="Bailey T.L."/>
            <person name="Bansal M."/>
            <person name="Baxter L."/>
            <person name="Beisel K.W."/>
            <person name="Bersano T."/>
            <person name="Bono H."/>
            <person name="Chalk A.M."/>
            <person name="Chiu K.P."/>
            <person name="Choudhary V."/>
            <person name="Christoffels A."/>
            <person name="Clutterbuck D.R."/>
            <person name="Crowe M.L."/>
            <person name="Dalla E."/>
            <person name="Dalrymple B.P."/>
            <person name="de Bono B."/>
            <person name="Della Gatta G."/>
            <person name="di Bernardo D."/>
            <person name="Down T."/>
            <person name="Engstrom P."/>
            <person name="Fagiolini M."/>
            <person name="Faulkner G."/>
            <person name="Fletcher C.F."/>
            <person name="Fukushima T."/>
            <person name="Furuno M."/>
            <person name="Futaki S."/>
            <person name="Gariboldi M."/>
            <person name="Georgii-Hemming P."/>
            <person name="Gingeras T.R."/>
            <person name="Gojobori T."/>
            <person name="Green R.E."/>
            <person name="Gustincich S."/>
            <person name="Harbers M."/>
            <person name="Hayashi Y."/>
            <person name="Hensch T.K."/>
            <person name="Hirokawa N."/>
            <person name="Hill D."/>
            <person name="Huminiecki L."/>
            <person name="Iacono M."/>
            <person name="Ikeo K."/>
            <person name="Iwama A."/>
            <person name="Ishikawa T."/>
            <person name="Jakt M."/>
            <person name="Kanapin A."/>
            <person name="Katoh M."/>
            <person name="Kawasawa Y."/>
            <person name="Kelso J."/>
            <person name="Kitamura H."/>
            <person name="Kitano H."/>
            <person name="Kollias G."/>
            <person name="Krishnan S.P."/>
            <person name="Kruger A."/>
            <person name="Kummerfeld S.K."/>
            <person name="Kurochkin I.V."/>
            <person name="Lareau L.F."/>
            <person name="Lazarevic D."/>
            <person name="Lipovich L."/>
            <person name="Liu J."/>
            <person name="Liuni S."/>
            <person name="McWilliam S."/>
            <person name="Madan Babu M."/>
            <person name="Madera M."/>
            <person name="Marchionni L."/>
            <person name="Matsuda H."/>
            <person name="Matsuzawa S."/>
            <person name="Miki H."/>
            <person name="Mignone F."/>
            <person name="Miyake S."/>
            <person name="Morris K."/>
            <person name="Mottagui-Tabar S."/>
            <person name="Mulder N."/>
            <person name="Nakano N."/>
            <person name="Nakauchi H."/>
            <person name="Ng P."/>
            <person name="Nilsson R."/>
            <person name="Nishiguchi S."/>
            <person name="Nishikawa S."/>
            <person name="Nori F."/>
            <person name="Ohara O."/>
            <person name="Okazaki Y."/>
            <person name="Orlando V."/>
            <person name="Pang K.C."/>
            <person name="Pavan W.J."/>
            <person name="Pavesi G."/>
            <person name="Pesole G."/>
            <person name="Petrovsky N."/>
            <person name="Piazza S."/>
            <person name="Reed J."/>
            <person name="Reid J.F."/>
            <person name="Ring B.Z."/>
            <person name="Ringwald M."/>
            <person name="Rost B."/>
            <person name="Ruan Y."/>
            <person name="Salzberg S.L."/>
            <person name="Sandelin A."/>
            <person name="Schneider C."/>
            <person name="Schoenbach C."/>
            <person name="Sekiguchi K."/>
            <person name="Semple C.A."/>
            <person name="Seno S."/>
            <person name="Sessa L."/>
            <person name="Sheng Y."/>
            <person name="Shibata Y."/>
            <person name="Shimada H."/>
            <person name="Shimada K."/>
            <person name="Silva D."/>
            <person name="Sinclair B."/>
            <person name="Sperling S."/>
            <person name="Stupka E."/>
            <person name="Sugiura K."/>
            <person name="Sultana R."/>
            <person name="Takenaka Y."/>
            <person name="Taki K."/>
            <person name="Tammoja K."/>
            <person name="Tan S.L."/>
            <person name="Tang S."/>
            <person name="Taylor M.S."/>
            <person name="Tegner J."/>
            <person name="Teichmann S.A."/>
            <person name="Ueda H.R."/>
            <person name="van Nimwegen E."/>
            <person name="Verardo R."/>
            <person name="Wei C.L."/>
            <person name="Yagi K."/>
            <person name="Yamanishi H."/>
            <person name="Zabarovsky E."/>
            <person name="Zhu S."/>
            <person name="Zimmer A."/>
            <person name="Hide W."/>
            <person name="Bult C."/>
            <person name="Grimmond S.M."/>
            <person name="Teasdale R.D."/>
            <person name="Liu E.T."/>
            <person name="Brusic V."/>
            <person name="Quackenbush J."/>
            <person name="Wahlestedt C."/>
            <person name="Mattick J.S."/>
            <person name="Hume D.A."/>
            <person name="Kai C."/>
            <person name="Sasaki D."/>
            <person name="Tomaru Y."/>
            <person name="Fukuda S."/>
            <person name="Kanamori-Katayama M."/>
            <person name="Suzuki M."/>
            <person name="Aoki J."/>
            <person name="Arakawa T."/>
            <person name="Iida J."/>
            <person name="Imamura K."/>
            <person name="Itoh M."/>
            <person name="Kato T."/>
            <person name="Kawaji H."/>
            <person name="Kawagashira N."/>
            <person name="Kawashima T."/>
            <person name="Kojima M."/>
            <person name="Kondo S."/>
            <person name="Konno H."/>
            <person name="Nakano K."/>
            <person name="Ninomiya N."/>
            <person name="Nishio T."/>
            <person name="Okada M."/>
            <person name="Plessy C."/>
            <person name="Shibata K."/>
            <person name="Shiraki T."/>
            <person name="Suzuki S."/>
            <person name="Tagami M."/>
            <person name="Waki K."/>
            <person name="Watahiki A."/>
            <person name="Okamura-Oho Y."/>
            <person name="Suzuki H."/>
            <person name="Kawai J."/>
            <person name="Hayashizaki Y."/>
        </authorList>
    </citation>
    <scope>NUCLEOTIDE SEQUENCE [LARGE SCALE MRNA]</scope>
    <source>
        <strain>C57BL/6J</strain>
        <tissue>Pancreas</tissue>
    </source>
</reference>
<reference key="2">
    <citation type="journal article" date="2006" name="Nature">
        <title>DNA sequence of human chromosome 17 and analysis of rearrangement in the human lineage.</title>
        <authorList>
            <person name="Zody M.C."/>
            <person name="Garber M."/>
            <person name="Adams D.J."/>
            <person name="Sharpe T."/>
            <person name="Harrow J."/>
            <person name="Lupski J.R."/>
            <person name="Nicholson C."/>
            <person name="Searle S.M."/>
            <person name="Wilming L."/>
            <person name="Young S.K."/>
            <person name="Abouelleil A."/>
            <person name="Allen N.R."/>
            <person name="Bi W."/>
            <person name="Bloom T."/>
            <person name="Borowsky M.L."/>
            <person name="Bugalter B.E."/>
            <person name="Butler J."/>
            <person name="Chang J.L."/>
            <person name="Chen C.-K."/>
            <person name="Cook A."/>
            <person name="Corum B."/>
            <person name="Cuomo C.A."/>
            <person name="de Jong P.J."/>
            <person name="DeCaprio D."/>
            <person name="Dewar K."/>
            <person name="FitzGerald M."/>
            <person name="Gilbert J."/>
            <person name="Gibson R."/>
            <person name="Gnerre S."/>
            <person name="Goldstein S."/>
            <person name="Grafham D.V."/>
            <person name="Grocock R."/>
            <person name="Hafez N."/>
            <person name="Hagopian D.S."/>
            <person name="Hart E."/>
            <person name="Norman C.H."/>
            <person name="Humphray S."/>
            <person name="Jaffe D.B."/>
            <person name="Jones M."/>
            <person name="Kamal M."/>
            <person name="Khodiyar V.K."/>
            <person name="LaButti K."/>
            <person name="Laird G."/>
            <person name="Lehoczky J."/>
            <person name="Liu X."/>
            <person name="Lokyitsang T."/>
            <person name="Loveland J."/>
            <person name="Lui A."/>
            <person name="Macdonald P."/>
            <person name="Major J.E."/>
            <person name="Matthews L."/>
            <person name="Mauceli E."/>
            <person name="McCarroll S.A."/>
            <person name="Mihalev A.H."/>
            <person name="Mudge J."/>
            <person name="Nguyen C."/>
            <person name="Nicol R."/>
            <person name="O'Leary S.B."/>
            <person name="Osoegawa K."/>
            <person name="Schwartz D.C."/>
            <person name="Shaw-Smith C."/>
            <person name="Stankiewicz P."/>
            <person name="Steward C."/>
            <person name="Swarbreck D."/>
            <person name="Venkataraman V."/>
            <person name="Whittaker C.A."/>
            <person name="Yang X."/>
            <person name="Zimmer A.R."/>
            <person name="Bradley A."/>
            <person name="Hubbard T."/>
            <person name="Birren B.W."/>
            <person name="Rogers J."/>
            <person name="Lander E.S."/>
            <person name="Nusbaum C."/>
        </authorList>
    </citation>
    <scope>NUCLEOTIDE SEQUENCE [LARGE SCALE GENOMIC DNA]</scope>
</reference>
<reference key="3">
    <citation type="journal article" date="2009" name="PLoS Biol.">
        <title>Lineage-specific biology revealed by a finished genome assembly of the mouse.</title>
        <authorList>
            <person name="Church D.M."/>
            <person name="Goodstadt L."/>
            <person name="Hillier L.W."/>
            <person name="Zody M.C."/>
            <person name="Goldstein S."/>
            <person name="She X."/>
            <person name="Bult C.J."/>
            <person name="Agarwala R."/>
            <person name="Cherry J.L."/>
            <person name="DiCuccio M."/>
            <person name="Hlavina W."/>
            <person name="Kapustin Y."/>
            <person name="Meric P."/>
            <person name="Maglott D."/>
            <person name="Birtle Z."/>
            <person name="Marques A.C."/>
            <person name="Graves T."/>
            <person name="Zhou S."/>
            <person name="Teague B."/>
            <person name="Potamousis K."/>
            <person name="Churas C."/>
            <person name="Place M."/>
            <person name="Herschleb J."/>
            <person name="Runnheim R."/>
            <person name="Forrest D."/>
            <person name="Amos-Landgraf J."/>
            <person name="Schwartz D.C."/>
            <person name="Cheng Z."/>
            <person name="Lindblad-Toh K."/>
            <person name="Eichler E.E."/>
            <person name="Ponting C.P."/>
        </authorList>
    </citation>
    <scope>NUCLEOTIDE SEQUENCE [LARGE SCALE GENOMIC DNA]</scope>
    <source>
        <strain>C57BL/6J</strain>
    </source>
</reference>
<reference key="4">
    <citation type="journal article" date="2004" name="Genome Res.">
        <title>The status, quality, and expansion of the NIH full-length cDNA project: the Mammalian Gene Collection (MGC).</title>
        <authorList>
            <consortium name="The MGC Project Team"/>
        </authorList>
    </citation>
    <scope>NUCLEOTIDE SEQUENCE [LARGE SCALE MRNA]</scope>
    <source>
        <strain>C57BL/6J</strain>
        <tissue>Thymus</tissue>
    </source>
</reference>
<reference key="5">
    <citation type="journal article" date="2010" name="Cell">
        <title>A tissue-specific atlas of mouse protein phosphorylation and expression.</title>
        <authorList>
            <person name="Huttlin E.L."/>
            <person name="Jedrychowski M.P."/>
            <person name="Elias J.E."/>
            <person name="Goswami T."/>
            <person name="Rad R."/>
            <person name="Beausoleil S.A."/>
            <person name="Villen J."/>
            <person name="Haas W."/>
            <person name="Sowa M.E."/>
            <person name="Gygi S.P."/>
        </authorList>
    </citation>
    <scope>IDENTIFICATION BY MASS SPECTROMETRY [LARGE SCALE ANALYSIS]</scope>
    <source>
        <tissue>Brain</tissue>
        <tissue>Brown adipose tissue</tissue>
        <tissue>Heart</tissue>
        <tissue>Lung</tissue>
        <tissue>Pancreas</tissue>
    </source>
</reference>